<proteinExistence type="inferred from homology"/>
<reference key="1">
    <citation type="journal article" date="2009" name="PLoS Pathog.">
        <title>Genomic evidence for the evolution of Streptococcus equi: host restriction, increased virulence, and genetic exchange with human pathogens.</title>
        <authorList>
            <person name="Holden M.T.G."/>
            <person name="Heather Z."/>
            <person name="Paillot R."/>
            <person name="Steward K.F."/>
            <person name="Webb K."/>
            <person name="Ainslie F."/>
            <person name="Jourdan T."/>
            <person name="Bason N.C."/>
            <person name="Holroyd N.E."/>
            <person name="Mungall K."/>
            <person name="Quail M.A."/>
            <person name="Sanders M."/>
            <person name="Simmonds M."/>
            <person name="Willey D."/>
            <person name="Brooks K."/>
            <person name="Aanensen D.M."/>
            <person name="Spratt B.G."/>
            <person name="Jolley K.A."/>
            <person name="Maiden M.C.J."/>
            <person name="Kehoe M."/>
            <person name="Chanter N."/>
            <person name="Bentley S.D."/>
            <person name="Robinson C."/>
            <person name="Maskell D.J."/>
            <person name="Parkhill J."/>
            <person name="Waller A.S."/>
        </authorList>
    </citation>
    <scope>NUCLEOTIDE SEQUENCE [LARGE SCALE GENOMIC DNA]</scope>
    <source>
        <strain>4047</strain>
    </source>
</reference>
<feature type="chain" id="PRO_1000185461" description="UPF0371 protein SEQ_1471">
    <location>
        <begin position="1"/>
        <end position="494"/>
    </location>
</feature>
<accession>C0MC19</accession>
<comment type="similarity">
    <text evidence="1">Belongs to the UPF0371 family.</text>
</comment>
<gene>
    <name type="ordered locus">SEQ_1471</name>
</gene>
<dbReference type="EMBL" id="FM204883">
    <property type="protein sequence ID" value="CAW94375.1"/>
    <property type="molecule type" value="Genomic_DNA"/>
</dbReference>
<dbReference type="RefSeq" id="WP_012679778.1">
    <property type="nucleotide sequence ID" value="NC_012471.1"/>
</dbReference>
<dbReference type="SMR" id="C0MC19"/>
<dbReference type="KEGG" id="seu:SEQ_1471"/>
<dbReference type="HOGENOM" id="CLU_046981_0_0_9"/>
<dbReference type="OrthoDB" id="9803572at2"/>
<dbReference type="Proteomes" id="UP000001365">
    <property type="component" value="Chromosome"/>
</dbReference>
<dbReference type="Gene3D" id="1.20.1570.10">
    <property type="entry name" value="dip2346 domain like"/>
    <property type="match status" value="1"/>
</dbReference>
<dbReference type="Gene3D" id="3.10.630.10">
    <property type="entry name" value="dip2346 domain like"/>
    <property type="match status" value="1"/>
</dbReference>
<dbReference type="Gene3D" id="3.40.140.40">
    <property type="entry name" value="Domain of unknown function (DUF1846), C-terminal subdomain"/>
    <property type="match status" value="1"/>
</dbReference>
<dbReference type="HAMAP" id="MF_01567">
    <property type="entry name" value="UPF0371"/>
    <property type="match status" value="1"/>
</dbReference>
<dbReference type="InterPro" id="IPR014999">
    <property type="entry name" value="DUF1846"/>
</dbReference>
<dbReference type="InterPro" id="IPR048441">
    <property type="entry name" value="DUF1846_C"/>
</dbReference>
<dbReference type="InterPro" id="IPR048496">
    <property type="entry name" value="DUF1846_N"/>
</dbReference>
<dbReference type="NCBIfam" id="NF010184">
    <property type="entry name" value="PRK13663.1"/>
    <property type="match status" value="1"/>
</dbReference>
<dbReference type="Pfam" id="PF08903">
    <property type="entry name" value="DUF1846"/>
    <property type="match status" value="1"/>
</dbReference>
<dbReference type="Pfam" id="PF20921">
    <property type="entry name" value="DUF1846_C"/>
    <property type="match status" value="1"/>
</dbReference>
<dbReference type="PIRSF" id="PIRSF033132">
    <property type="entry name" value="DUF1846"/>
    <property type="match status" value="1"/>
</dbReference>
<name>Y1471_STRE4</name>
<sequence length="494" mass="55367">MKNIAFDSNKYLSLQRNHILERIKQFDGKLYMEFGGKILEDFHAARVLPGYEPDNKIKLLKELKDQVEIVITINANNIEHSKTRGDLGISYDQEVLRLIDTFNALDIYVGSVVITQYNHQAAADHFQKQLAKNGITSYRHYPIKGYPTDINHIISPDGMGRNDYIKTSRNLIVVTAPGPGSGKLATCISQLYHDQLKGVTSGYAKFETFPVWNLPLHHPVNLAYEAATADLDDVNMIDPFHLEAYGKTAVNYNRDIEVFPVLNRTFERILSQSPYASPTDMGVNMVGFSIVNEEAAIEASRQEIIRRYYQTLVDFKAERVTEAAVKKLELLMNDIGVTPKDRQVTLIARQKAEITGQPALALQLPNGQVVTGKTSDLFGPTAAVIINAIKTLAHISKETHLIEPEYVKPIQGLKINHLGSHNPRLHANEILMALAITAMNNNQADLAMKELGNLKGSEAHSTVILTNEDKHVLRQLGINVTFDPVYQHHKLYRS</sequence>
<protein>
    <recommendedName>
        <fullName evidence="1">UPF0371 protein SEQ_1471</fullName>
    </recommendedName>
</protein>
<evidence type="ECO:0000255" key="1">
    <source>
        <dbReference type="HAMAP-Rule" id="MF_01567"/>
    </source>
</evidence>
<organism>
    <name type="scientific">Streptococcus equi subsp. equi (strain 4047)</name>
    <dbReference type="NCBI Taxonomy" id="553482"/>
    <lineage>
        <taxon>Bacteria</taxon>
        <taxon>Bacillati</taxon>
        <taxon>Bacillota</taxon>
        <taxon>Bacilli</taxon>
        <taxon>Lactobacillales</taxon>
        <taxon>Streptococcaceae</taxon>
        <taxon>Streptococcus</taxon>
    </lineage>
</organism>